<protein>
    <recommendedName>
        <fullName evidence="1">Protein nucleotidyltransferase YdiU</fullName>
        <ecNumber evidence="1">2.7.7.-</ecNumber>
    </recommendedName>
    <alternativeName>
        <fullName evidence="1">Protein adenylyltransferase YdiU</fullName>
        <ecNumber evidence="1">2.7.7.108</ecNumber>
    </alternativeName>
    <alternativeName>
        <fullName evidence="1">Protein uridylyltransferase YdiU</fullName>
        <ecNumber evidence="1">2.7.7.-</ecNumber>
    </alternativeName>
</protein>
<gene>
    <name evidence="1" type="primary">ydiU</name>
    <name evidence="1" type="synonym">selO</name>
    <name type="ordered locus">SPO2480</name>
</gene>
<reference key="1">
    <citation type="journal article" date="2004" name="Nature">
        <title>Genome sequence of Silicibacter pomeroyi reveals adaptations to the marine environment.</title>
        <authorList>
            <person name="Moran M.A."/>
            <person name="Buchan A."/>
            <person name="Gonzalez J.M."/>
            <person name="Heidelberg J.F."/>
            <person name="Whitman W.B."/>
            <person name="Kiene R.P."/>
            <person name="Henriksen J.R."/>
            <person name="King G.M."/>
            <person name="Belas R."/>
            <person name="Fuqua C."/>
            <person name="Brinkac L.M."/>
            <person name="Lewis M."/>
            <person name="Johri S."/>
            <person name="Weaver B."/>
            <person name="Pai G."/>
            <person name="Eisen J.A."/>
            <person name="Rahe E."/>
            <person name="Sheldon W.M."/>
            <person name="Ye W."/>
            <person name="Miller T.R."/>
            <person name="Carlton J."/>
            <person name="Rasko D.A."/>
            <person name="Paulsen I.T."/>
            <person name="Ren Q."/>
            <person name="Daugherty S.C."/>
            <person name="DeBoy R.T."/>
            <person name="Dodson R.J."/>
            <person name="Durkin A.S."/>
            <person name="Madupu R."/>
            <person name="Nelson W.C."/>
            <person name="Sullivan S.A."/>
            <person name="Rosovitz M.J."/>
            <person name="Haft D.H."/>
            <person name="Selengut J."/>
            <person name="Ward N."/>
        </authorList>
    </citation>
    <scope>NUCLEOTIDE SEQUENCE [LARGE SCALE GENOMIC DNA]</scope>
    <source>
        <strain>ATCC 700808 / DSM 15171 / DSS-3</strain>
    </source>
</reference>
<reference key="2">
    <citation type="journal article" date="2014" name="Stand. Genomic Sci.">
        <title>An updated genome annotation for the model marine bacterium Ruegeria pomeroyi DSS-3.</title>
        <authorList>
            <person name="Rivers A.R."/>
            <person name="Smith C.B."/>
            <person name="Moran M.A."/>
        </authorList>
    </citation>
    <scope>GENOME REANNOTATION</scope>
    <source>
        <strain>ATCC 700808 / DSM 15171 / DSS-3</strain>
    </source>
</reference>
<sequence length="472" mass="51487">MTIAIPFDNSYARLPGGFYTAQAPQPVRAPRLVAFNADLARLLGIAPGEVEEMAQVFAGNAVPQGAEPLAQLYSGHQFGNYNPQLGDGRAILLGEVLGSDGIRRDIQLKGAGRTPYSRGGDGRAWLGPVLREYVVSEAMAALGIPTTRALAAVETGETVRRESALPGAVLTRVAQSHLRVGTFQVFAARGEIAHLKRLTDYAIARHYPDAQGPMGLLAAVRDAQARLIARWMGVGFIHGVMNTDNSSIAGETIDYGPCAFMDTYHPDTVYSSIDRYGRYAYSNQPDIAVWNLAQLATALIQQAEDKEAVVEEATEIVHAMPELLERAWLEVFAAKIGIARPGEGDKALVSELLTRMAREQADFTNTFRALGAPRARDQFTDPTAYDSWAEDWRQRLTQEATPEAVIRAANPAFIPRNHRIEQMITAAVEGDYTLFERLNTVLARPYADQPDHIDLTRPPSASEIVPATFCGT</sequence>
<dbReference type="EC" id="2.7.7.-" evidence="1"/>
<dbReference type="EC" id="2.7.7.108" evidence="1"/>
<dbReference type="EMBL" id="CP000031">
    <property type="protein sequence ID" value="AAV95733.1"/>
    <property type="status" value="ALT_INIT"/>
    <property type="molecule type" value="Genomic_DNA"/>
</dbReference>
<dbReference type="RefSeq" id="WP_044028445.1">
    <property type="nucleotide sequence ID" value="NC_003911.12"/>
</dbReference>
<dbReference type="SMR" id="Q5LQK9"/>
<dbReference type="STRING" id="246200.SPO2480"/>
<dbReference type="PaxDb" id="246200-SPO2480"/>
<dbReference type="KEGG" id="sil:SPO2480"/>
<dbReference type="eggNOG" id="COG0397">
    <property type="taxonomic scope" value="Bacteria"/>
</dbReference>
<dbReference type="HOGENOM" id="CLU_010245_4_1_5"/>
<dbReference type="OrthoDB" id="9776281at2"/>
<dbReference type="Proteomes" id="UP000001023">
    <property type="component" value="Chromosome"/>
</dbReference>
<dbReference type="GO" id="GO:0070733">
    <property type="term" value="F:AMPylase activity"/>
    <property type="evidence" value="ECO:0007669"/>
    <property type="project" value="RHEA"/>
</dbReference>
<dbReference type="GO" id="GO:0005524">
    <property type="term" value="F:ATP binding"/>
    <property type="evidence" value="ECO:0007669"/>
    <property type="project" value="UniProtKB-UniRule"/>
</dbReference>
<dbReference type="GO" id="GO:0000287">
    <property type="term" value="F:magnesium ion binding"/>
    <property type="evidence" value="ECO:0007669"/>
    <property type="project" value="UniProtKB-UniRule"/>
</dbReference>
<dbReference type="HAMAP" id="MF_00692">
    <property type="entry name" value="YdiU_SelO"/>
    <property type="match status" value="1"/>
</dbReference>
<dbReference type="InterPro" id="IPR003846">
    <property type="entry name" value="SelO"/>
</dbReference>
<dbReference type="NCBIfam" id="NF000658">
    <property type="entry name" value="PRK00029.1"/>
    <property type="match status" value="1"/>
</dbReference>
<dbReference type="PANTHER" id="PTHR32057">
    <property type="entry name" value="PROTEIN ADENYLYLTRANSFERASE SELO, MITOCHONDRIAL"/>
    <property type="match status" value="1"/>
</dbReference>
<dbReference type="PANTHER" id="PTHR32057:SF14">
    <property type="entry name" value="PROTEIN ADENYLYLTRANSFERASE SELO, MITOCHONDRIAL"/>
    <property type="match status" value="1"/>
</dbReference>
<dbReference type="Pfam" id="PF02696">
    <property type="entry name" value="SelO"/>
    <property type="match status" value="1"/>
</dbReference>
<feature type="chain" id="PRO_0000271871" description="Protein nucleotidyltransferase YdiU">
    <location>
        <begin position="1"/>
        <end position="472"/>
    </location>
</feature>
<feature type="active site" description="Proton acceptor" evidence="1">
    <location>
        <position position="244"/>
    </location>
</feature>
<feature type="binding site" evidence="1">
    <location>
        <position position="86"/>
    </location>
    <ligand>
        <name>ATP</name>
        <dbReference type="ChEBI" id="CHEBI:30616"/>
    </ligand>
</feature>
<feature type="binding site" evidence="1">
    <location>
        <position position="88"/>
    </location>
    <ligand>
        <name>ATP</name>
        <dbReference type="ChEBI" id="CHEBI:30616"/>
    </ligand>
</feature>
<feature type="binding site" evidence="1">
    <location>
        <position position="89"/>
    </location>
    <ligand>
        <name>ATP</name>
        <dbReference type="ChEBI" id="CHEBI:30616"/>
    </ligand>
</feature>
<feature type="binding site" evidence="1">
    <location>
        <position position="109"/>
    </location>
    <ligand>
        <name>ATP</name>
        <dbReference type="ChEBI" id="CHEBI:30616"/>
    </ligand>
</feature>
<feature type="binding site" evidence="1">
    <location>
        <position position="121"/>
    </location>
    <ligand>
        <name>ATP</name>
        <dbReference type="ChEBI" id="CHEBI:30616"/>
    </ligand>
</feature>
<feature type="binding site" evidence="1">
    <location>
        <position position="122"/>
    </location>
    <ligand>
        <name>ATP</name>
        <dbReference type="ChEBI" id="CHEBI:30616"/>
    </ligand>
</feature>
<feature type="binding site" evidence="1">
    <location>
        <position position="172"/>
    </location>
    <ligand>
        <name>ATP</name>
        <dbReference type="ChEBI" id="CHEBI:30616"/>
    </ligand>
</feature>
<feature type="binding site" evidence="1">
    <location>
        <position position="179"/>
    </location>
    <ligand>
        <name>ATP</name>
        <dbReference type="ChEBI" id="CHEBI:30616"/>
    </ligand>
</feature>
<feature type="binding site" evidence="1">
    <location>
        <position position="245"/>
    </location>
    <ligand>
        <name>Mg(2+)</name>
        <dbReference type="ChEBI" id="CHEBI:18420"/>
    </ligand>
</feature>
<feature type="binding site" evidence="1">
    <location>
        <position position="254"/>
    </location>
    <ligand>
        <name>ATP</name>
        <dbReference type="ChEBI" id="CHEBI:30616"/>
    </ligand>
</feature>
<feature type="binding site" evidence="1">
    <location>
        <position position="254"/>
    </location>
    <ligand>
        <name>Mg(2+)</name>
        <dbReference type="ChEBI" id="CHEBI:18420"/>
    </ligand>
</feature>
<comment type="function">
    <text evidence="1">Nucleotidyltransferase involved in the post-translational modification of proteins. It can catalyze the addition of adenosine monophosphate (AMP) or uridine monophosphate (UMP) to a protein, resulting in modifications known as AMPylation and UMPylation.</text>
</comment>
<comment type="catalytic activity">
    <reaction evidence="1">
        <text>L-seryl-[protein] + ATP = 3-O-(5'-adenylyl)-L-seryl-[protein] + diphosphate</text>
        <dbReference type="Rhea" id="RHEA:58120"/>
        <dbReference type="Rhea" id="RHEA-COMP:9863"/>
        <dbReference type="Rhea" id="RHEA-COMP:15073"/>
        <dbReference type="ChEBI" id="CHEBI:29999"/>
        <dbReference type="ChEBI" id="CHEBI:30616"/>
        <dbReference type="ChEBI" id="CHEBI:33019"/>
        <dbReference type="ChEBI" id="CHEBI:142516"/>
        <dbReference type="EC" id="2.7.7.108"/>
    </reaction>
</comment>
<comment type="catalytic activity">
    <reaction evidence="1">
        <text>L-threonyl-[protein] + ATP = 3-O-(5'-adenylyl)-L-threonyl-[protein] + diphosphate</text>
        <dbReference type="Rhea" id="RHEA:54292"/>
        <dbReference type="Rhea" id="RHEA-COMP:11060"/>
        <dbReference type="Rhea" id="RHEA-COMP:13847"/>
        <dbReference type="ChEBI" id="CHEBI:30013"/>
        <dbReference type="ChEBI" id="CHEBI:30616"/>
        <dbReference type="ChEBI" id="CHEBI:33019"/>
        <dbReference type="ChEBI" id="CHEBI:138113"/>
        <dbReference type="EC" id="2.7.7.108"/>
    </reaction>
</comment>
<comment type="catalytic activity">
    <reaction evidence="1">
        <text>L-tyrosyl-[protein] + ATP = O-(5'-adenylyl)-L-tyrosyl-[protein] + diphosphate</text>
        <dbReference type="Rhea" id="RHEA:54288"/>
        <dbReference type="Rhea" id="RHEA-COMP:10136"/>
        <dbReference type="Rhea" id="RHEA-COMP:13846"/>
        <dbReference type="ChEBI" id="CHEBI:30616"/>
        <dbReference type="ChEBI" id="CHEBI:33019"/>
        <dbReference type="ChEBI" id="CHEBI:46858"/>
        <dbReference type="ChEBI" id="CHEBI:83624"/>
        <dbReference type="EC" id="2.7.7.108"/>
    </reaction>
</comment>
<comment type="catalytic activity">
    <reaction evidence="1">
        <text>L-histidyl-[protein] + UTP = N(tele)-(5'-uridylyl)-L-histidyl-[protein] + diphosphate</text>
        <dbReference type="Rhea" id="RHEA:83891"/>
        <dbReference type="Rhea" id="RHEA-COMP:9745"/>
        <dbReference type="Rhea" id="RHEA-COMP:20239"/>
        <dbReference type="ChEBI" id="CHEBI:29979"/>
        <dbReference type="ChEBI" id="CHEBI:33019"/>
        <dbReference type="ChEBI" id="CHEBI:46398"/>
        <dbReference type="ChEBI" id="CHEBI:233474"/>
    </reaction>
</comment>
<comment type="catalytic activity">
    <reaction evidence="1">
        <text>L-seryl-[protein] + UTP = O-(5'-uridylyl)-L-seryl-[protein] + diphosphate</text>
        <dbReference type="Rhea" id="RHEA:64604"/>
        <dbReference type="Rhea" id="RHEA-COMP:9863"/>
        <dbReference type="Rhea" id="RHEA-COMP:16635"/>
        <dbReference type="ChEBI" id="CHEBI:29999"/>
        <dbReference type="ChEBI" id="CHEBI:33019"/>
        <dbReference type="ChEBI" id="CHEBI:46398"/>
        <dbReference type="ChEBI" id="CHEBI:156051"/>
    </reaction>
</comment>
<comment type="catalytic activity">
    <reaction evidence="1">
        <text>L-tyrosyl-[protein] + UTP = O-(5'-uridylyl)-L-tyrosyl-[protein] + diphosphate</text>
        <dbReference type="Rhea" id="RHEA:83887"/>
        <dbReference type="Rhea" id="RHEA-COMP:10136"/>
        <dbReference type="Rhea" id="RHEA-COMP:20238"/>
        <dbReference type="ChEBI" id="CHEBI:33019"/>
        <dbReference type="ChEBI" id="CHEBI:46398"/>
        <dbReference type="ChEBI" id="CHEBI:46858"/>
        <dbReference type="ChEBI" id="CHEBI:90602"/>
    </reaction>
</comment>
<comment type="cofactor">
    <cofactor evidence="1">
        <name>Mg(2+)</name>
        <dbReference type="ChEBI" id="CHEBI:18420"/>
    </cofactor>
    <cofactor evidence="1">
        <name>Mn(2+)</name>
        <dbReference type="ChEBI" id="CHEBI:29035"/>
    </cofactor>
</comment>
<comment type="similarity">
    <text evidence="1">Belongs to the SELO family.</text>
</comment>
<comment type="sequence caution" evidence="2">
    <conflict type="erroneous initiation">
        <sequence resource="EMBL-CDS" id="AAV95733"/>
    </conflict>
</comment>
<organism>
    <name type="scientific">Ruegeria pomeroyi (strain ATCC 700808 / DSM 15171 / DSS-3)</name>
    <name type="common">Silicibacter pomeroyi</name>
    <dbReference type="NCBI Taxonomy" id="246200"/>
    <lineage>
        <taxon>Bacteria</taxon>
        <taxon>Pseudomonadati</taxon>
        <taxon>Pseudomonadota</taxon>
        <taxon>Alphaproteobacteria</taxon>
        <taxon>Rhodobacterales</taxon>
        <taxon>Roseobacteraceae</taxon>
        <taxon>Ruegeria</taxon>
    </lineage>
</organism>
<keyword id="KW-0067">ATP-binding</keyword>
<keyword id="KW-0460">Magnesium</keyword>
<keyword id="KW-0464">Manganese</keyword>
<keyword id="KW-0479">Metal-binding</keyword>
<keyword id="KW-0547">Nucleotide-binding</keyword>
<keyword id="KW-0548">Nucleotidyltransferase</keyword>
<keyword id="KW-1185">Reference proteome</keyword>
<keyword id="KW-0808">Transferase</keyword>
<accession>Q5LQK9</accession>
<proteinExistence type="inferred from homology"/>
<name>SELO_RUEPO</name>
<evidence type="ECO:0000255" key="1">
    <source>
        <dbReference type="HAMAP-Rule" id="MF_00692"/>
    </source>
</evidence>
<evidence type="ECO:0000305" key="2"/>